<organism>
    <name type="scientific">Lachancea thermotolerans (strain ATCC 56472 / CBS 6340 / NRRL Y-8284)</name>
    <name type="common">Yeast</name>
    <name type="synonym">Kluyveromyces thermotolerans</name>
    <dbReference type="NCBI Taxonomy" id="559295"/>
    <lineage>
        <taxon>Eukaryota</taxon>
        <taxon>Fungi</taxon>
        <taxon>Dikarya</taxon>
        <taxon>Ascomycota</taxon>
        <taxon>Saccharomycotina</taxon>
        <taxon>Saccharomycetes</taxon>
        <taxon>Saccharomycetales</taxon>
        <taxon>Saccharomycetaceae</taxon>
        <taxon>Lachancea</taxon>
    </lineage>
</organism>
<evidence type="ECO:0000250" key="1"/>
<evidence type="ECO:0000255" key="2"/>
<evidence type="ECO:0000305" key="3"/>
<name>OSW5_LACTC</name>
<protein>
    <recommendedName>
        <fullName>Outer spore wall protein 5</fullName>
    </recommendedName>
</protein>
<proteinExistence type="inferred from homology"/>
<keyword id="KW-0472">Membrane</keyword>
<keyword id="KW-1185">Reference proteome</keyword>
<keyword id="KW-0749">Sporulation</keyword>
<keyword id="KW-0812">Transmembrane</keyword>
<keyword id="KW-1133">Transmembrane helix</keyword>
<gene>
    <name type="primary">OSW5</name>
    <name type="ordered locus">KLTH0H15840g</name>
</gene>
<feature type="chain" id="PRO_0000405524" description="Outer spore wall protein 5">
    <location>
        <begin position="1"/>
        <end position="129"/>
    </location>
</feature>
<feature type="topological domain" description="Cytoplasmic" evidence="2">
    <location>
        <position position="1"/>
    </location>
</feature>
<feature type="transmembrane region" description="Helical" evidence="2">
    <location>
        <begin position="2"/>
        <end position="21"/>
    </location>
</feature>
<feature type="topological domain" description="Extracellular" evidence="2">
    <location>
        <begin position="22"/>
        <end position="24"/>
    </location>
</feature>
<feature type="transmembrane region" description="Helical" evidence="2">
    <location>
        <begin position="25"/>
        <end position="47"/>
    </location>
</feature>
<feature type="topological domain" description="Cytoplasmic" evidence="2">
    <location>
        <begin position="48"/>
        <end position="129"/>
    </location>
</feature>
<dbReference type="EMBL" id="CU928180">
    <property type="protein sequence ID" value="CAR30681.1"/>
    <property type="molecule type" value="Genomic_DNA"/>
</dbReference>
<dbReference type="RefSeq" id="XP_002556543.1">
    <property type="nucleotide sequence ID" value="XM_002556497.1"/>
</dbReference>
<dbReference type="SMR" id="C5E3S0"/>
<dbReference type="FunCoup" id="C5E3S0">
    <property type="interactions" value="14"/>
</dbReference>
<dbReference type="GeneID" id="8294909"/>
<dbReference type="KEGG" id="lth:KLTH0H15840g"/>
<dbReference type="HOGENOM" id="CLU_1949205_0_0_1"/>
<dbReference type="InParanoid" id="C5E3S0"/>
<dbReference type="OrthoDB" id="4035996at2759"/>
<dbReference type="Proteomes" id="UP000002036">
    <property type="component" value="Chromosome H"/>
</dbReference>
<dbReference type="GO" id="GO:0016020">
    <property type="term" value="C:membrane"/>
    <property type="evidence" value="ECO:0007669"/>
    <property type="project" value="UniProtKB-SubCell"/>
</dbReference>
<dbReference type="GO" id="GO:0030435">
    <property type="term" value="P:sporulation resulting in formation of a cellular spore"/>
    <property type="evidence" value="ECO:0007669"/>
    <property type="project" value="UniProtKB-KW"/>
</dbReference>
<dbReference type="InterPro" id="IPR031430">
    <property type="entry name" value="Osw5"/>
</dbReference>
<dbReference type="Pfam" id="PF17062">
    <property type="entry name" value="Osw5"/>
    <property type="match status" value="1"/>
</dbReference>
<sequence>MSFTSIFIALLYLGGFLIILVTASAVILPLLITSLFFATGVVLCGFLSNKSYKLALRAYNLATPHTRSSLQAAADHLAPLDSVETVSPKEELLHKIHHFYKKSDSNVRTPIVVSGSEIPKSVIKVSEGT</sequence>
<comment type="function">
    <text evidence="1">Involved in spore wall assembly.</text>
</comment>
<comment type="subcellular location">
    <subcellularLocation>
        <location evidence="1">Membrane</location>
        <topology evidence="1">Multi-pass membrane protein</topology>
    </subcellularLocation>
</comment>
<comment type="similarity">
    <text evidence="3">Belongs to the OSW5 family.</text>
</comment>
<accession>C5E3S0</accession>
<reference key="1">
    <citation type="journal article" date="2009" name="Genome Res.">
        <title>Comparative genomics of protoploid Saccharomycetaceae.</title>
        <authorList>
            <consortium name="The Genolevures Consortium"/>
            <person name="Souciet J.-L."/>
            <person name="Dujon B."/>
            <person name="Gaillardin C."/>
            <person name="Johnston M."/>
            <person name="Baret P.V."/>
            <person name="Cliften P."/>
            <person name="Sherman D.J."/>
            <person name="Weissenbach J."/>
            <person name="Westhof E."/>
            <person name="Wincker P."/>
            <person name="Jubin C."/>
            <person name="Poulain J."/>
            <person name="Barbe V."/>
            <person name="Segurens B."/>
            <person name="Artiguenave F."/>
            <person name="Anthouard V."/>
            <person name="Vacherie B."/>
            <person name="Val M.-E."/>
            <person name="Fulton R.S."/>
            <person name="Minx P."/>
            <person name="Wilson R."/>
            <person name="Durrens P."/>
            <person name="Jean G."/>
            <person name="Marck C."/>
            <person name="Martin T."/>
            <person name="Nikolski M."/>
            <person name="Rolland T."/>
            <person name="Seret M.-L."/>
            <person name="Casaregola S."/>
            <person name="Despons L."/>
            <person name="Fairhead C."/>
            <person name="Fischer G."/>
            <person name="Lafontaine I."/>
            <person name="Leh V."/>
            <person name="Lemaire M."/>
            <person name="de Montigny J."/>
            <person name="Neuveglise C."/>
            <person name="Thierry A."/>
            <person name="Blanc-Lenfle I."/>
            <person name="Bleykasten C."/>
            <person name="Diffels J."/>
            <person name="Fritsch E."/>
            <person name="Frangeul L."/>
            <person name="Goeffon A."/>
            <person name="Jauniaux N."/>
            <person name="Kachouri-Lafond R."/>
            <person name="Payen C."/>
            <person name="Potier S."/>
            <person name="Pribylova L."/>
            <person name="Ozanne C."/>
            <person name="Richard G.-F."/>
            <person name="Sacerdot C."/>
            <person name="Straub M.-L."/>
            <person name="Talla E."/>
        </authorList>
    </citation>
    <scope>NUCLEOTIDE SEQUENCE [LARGE SCALE GENOMIC DNA]</scope>
    <source>
        <strain>ATCC 56472 / CBS 6340 / NRRL Y-8284</strain>
    </source>
</reference>